<protein>
    <recommendedName>
        <fullName evidence="1">UPF0738 protein BcerKBAB4_1107</fullName>
    </recommendedName>
</protein>
<feature type="chain" id="PRO_0000369653" description="UPF0738 protein BcerKBAB4_1107">
    <location>
        <begin position="1"/>
        <end position="123"/>
    </location>
</feature>
<dbReference type="EMBL" id="CP000903">
    <property type="protein sequence ID" value="ABY42356.1"/>
    <property type="molecule type" value="Genomic_DNA"/>
</dbReference>
<dbReference type="RefSeq" id="WP_002030390.1">
    <property type="nucleotide sequence ID" value="NC_010184.1"/>
</dbReference>
<dbReference type="KEGG" id="bwe:BcerKBAB4_1107"/>
<dbReference type="eggNOG" id="ENOG5032YMN">
    <property type="taxonomic scope" value="Bacteria"/>
</dbReference>
<dbReference type="HOGENOM" id="CLU_142282_0_0_9"/>
<dbReference type="Proteomes" id="UP000002154">
    <property type="component" value="Chromosome"/>
</dbReference>
<dbReference type="HAMAP" id="MF_01861">
    <property type="entry name" value="UPF0738"/>
    <property type="match status" value="1"/>
</dbReference>
<dbReference type="InterPro" id="IPR020908">
    <property type="entry name" value="UPF0738"/>
</dbReference>
<dbReference type="Pfam" id="PF19785">
    <property type="entry name" value="UPF0738"/>
    <property type="match status" value="1"/>
</dbReference>
<name>Y1107_BACMK</name>
<organism>
    <name type="scientific">Bacillus mycoides (strain KBAB4)</name>
    <name type="common">Bacillus weihenstephanensis</name>
    <dbReference type="NCBI Taxonomy" id="315730"/>
    <lineage>
        <taxon>Bacteria</taxon>
        <taxon>Bacillati</taxon>
        <taxon>Bacillota</taxon>
        <taxon>Bacilli</taxon>
        <taxon>Bacillales</taxon>
        <taxon>Bacillaceae</taxon>
        <taxon>Bacillus</taxon>
        <taxon>Bacillus cereus group</taxon>
    </lineage>
</organism>
<sequence length="123" mass="14128">MQNKIQVKSVETRENALIFCAENTEIEVKELSARNHVLVDSDNLSFLYILENESSFIYVSIPHTCWEAVHEAMNKDTAMFIRVNDVEIELEGLKEEVEYLVENIEGNANYGEELVTAVEKVFL</sequence>
<gene>
    <name type="ordered locus">BcerKBAB4_1107</name>
</gene>
<comment type="similarity">
    <text evidence="1">Belongs to the UPF0738 family.</text>
</comment>
<proteinExistence type="inferred from homology"/>
<evidence type="ECO:0000255" key="1">
    <source>
        <dbReference type="HAMAP-Rule" id="MF_01861"/>
    </source>
</evidence>
<reference key="1">
    <citation type="journal article" date="2008" name="Chem. Biol. Interact.">
        <title>Extending the Bacillus cereus group genomics to putative food-borne pathogens of different toxicity.</title>
        <authorList>
            <person name="Lapidus A."/>
            <person name="Goltsman E."/>
            <person name="Auger S."/>
            <person name="Galleron N."/>
            <person name="Segurens B."/>
            <person name="Dossat C."/>
            <person name="Land M.L."/>
            <person name="Broussolle V."/>
            <person name="Brillard J."/>
            <person name="Guinebretiere M.-H."/>
            <person name="Sanchis V."/>
            <person name="Nguen-the C."/>
            <person name="Lereclus D."/>
            <person name="Richardson P."/>
            <person name="Wincker P."/>
            <person name="Weissenbach J."/>
            <person name="Ehrlich S.D."/>
            <person name="Sorokin A."/>
        </authorList>
    </citation>
    <scope>NUCLEOTIDE SEQUENCE [LARGE SCALE GENOMIC DNA]</scope>
    <source>
        <strain>KBAB4</strain>
    </source>
</reference>
<accession>A9VJ67</accession>